<dbReference type="EC" id="5.1.99.6"/>
<dbReference type="EMBL" id="HE600996">
    <property type="protein sequence ID" value="CAP27887.1"/>
    <property type="molecule type" value="Genomic_DNA"/>
</dbReference>
<dbReference type="RefSeq" id="XP_002646101.1">
    <property type="nucleotide sequence ID" value="XM_002646055.1"/>
</dbReference>
<dbReference type="SMR" id="A8X5H6"/>
<dbReference type="FunCoup" id="A8X5H6">
    <property type="interactions" value="1352"/>
</dbReference>
<dbReference type="STRING" id="6238.A8X5H6"/>
<dbReference type="EnsemblMetazoa" id="CBG07973.1">
    <property type="protein sequence ID" value="CBG07973.1"/>
    <property type="gene ID" value="WBGene00029854"/>
</dbReference>
<dbReference type="GeneID" id="8588160"/>
<dbReference type="KEGG" id="cbr:CBG_07973"/>
<dbReference type="CTD" id="8588160"/>
<dbReference type="WormBase" id="CBG07973">
    <property type="protein sequence ID" value="CBP07799"/>
    <property type="gene ID" value="WBGene00029854"/>
</dbReference>
<dbReference type="eggNOG" id="KOG2585">
    <property type="taxonomic scope" value="Eukaryota"/>
</dbReference>
<dbReference type="HOGENOM" id="CLU_024853_3_0_1"/>
<dbReference type="InParanoid" id="A8X5H6"/>
<dbReference type="OMA" id="SMFRGRY"/>
<dbReference type="Proteomes" id="UP000008549">
    <property type="component" value="Unassembled WGS sequence"/>
</dbReference>
<dbReference type="GO" id="GO:0005739">
    <property type="term" value="C:mitochondrion"/>
    <property type="evidence" value="ECO:0000318"/>
    <property type="project" value="GO_Central"/>
</dbReference>
<dbReference type="GO" id="GO:0046872">
    <property type="term" value="F:metal ion binding"/>
    <property type="evidence" value="ECO:0007669"/>
    <property type="project" value="UniProtKB-KW"/>
</dbReference>
<dbReference type="GO" id="GO:0052856">
    <property type="term" value="F:NAD(P)HX epimerase activity"/>
    <property type="evidence" value="ECO:0000318"/>
    <property type="project" value="GO_Central"/>
</dbReference>
<dbReference type="GO" id="GO:0000166">
    <property type="term" value="F:nucleotide binding"/>
    <property type="evidence" value="ECO:0007669"/>
    <property type="project" value="UniProtKB-KW"/>
</dbReference>
<dbReference type="FunFam" id="3.40.50.10260:FF:000013">
    <property type="entry name" value="NAD(P)H-hydrate epimerase"/>
    <property type="match status" value="1"/>
</dbReference>
<dbReference type="Gene3D" id="3.40.50.10260">
    <property type="entry name" value="YjeF N-terminal domain"/>
    <property type="match status" value="1"/>
</dbReference>
<dbReference type="HAMAP" id="MF_01966">
    <property type="entry name" value="NADHX_epimerase"/>
    <property type="match status" value="1"/>
</dbReference>
<dbReference type="InterPro" id="IPR004443">
    <property type="entry name" value="YjeF_N_dom"/>
</dbReference>
<dbReference type="InterPro" id="IPR036652">
    <property type="entry name" value="YjeF_N_dom_sf"/>
</dbReference>
<dbReference type="InterPro" id="IPR032976">
    <property type="entry name" value="YJEFN_prot_NAXE-like"/>
</dbReference>
<dbReference type="NCBIfam" id="TIGR00197">
    <property type="entry name" value="yjeF_nterm"/>
    <property type="match status" value="1"/>
</dbReference>
<dbReference type="PANTHER" id="PTHR13232">
    <property type="entry name" value="NAD(P)H-HYDRATE EPIMERASE"/>
    <property type="match status" value="1"/>
</dbReference>
<dbReference type="PANTHER" id="PTHR13232:SF10">
    <property type="entry name" value="NAD(P)H-HYDRATE EPIMERASE"/>
    <property type="match status" value="1"/>
</dbReference>
<dbReference type="Pfam" id="PF03853">
    <property type="entry name" value="YjeF_N"/>
    <property type="match status" value="1"/>
</dbReference>
<dbReference type="SUPFAM" id="SSF64153">
    <property type="entry name" value="YjeF N-terminal domain-like"/>
    <property type="match status" value="1"/>
</dbReference>
<dbReference type="PROSITE" id="PS51385">
    <property type="entry name" value="YJEF_N"/>
    <property type="match status" value="1"/>
</dbReference>
<gene>
    <name type="ORF">CBG07973</name>
</gene>
<accession>A8X5H6</accession>
<feature type="chain" id="PRO_0000416312" description="NAD(P)H-hydrate epimerase">
    <location>
        <begin position="1"/>
        <end position="235"/>
    </location>
</feature>
<feature type="domain" description="YjeF N-terminal" evidence="1">
    <location>
        <begin position="18"/>
        <end position="221"/>
    </location>
</feature>
<feature type="binding site" evidence="1">
    <location>
        <begin position="65"/>
        <end position="69"/>
    </location>
    <ligand>
        <name>(6S)-NADPHX</name>
        <dbReference type="ChEBI" id="CHEBI:64076"/>
    </ligand>
</feature>
<feature type="binding site" evidence="1">
    <location>
        <position position="66"/>
    </location>
    <ligand>
        <name>K(+)</name>
        <dbReference type="ChEBI" id="CHEBI:29103"/>
    </ligand>
</feature>
<feature type="binding site" evidence="1">
    <location>
        <position position="127"/>
    </location>
    <ligand>
        <name>K(+)</name>
        <dbReference type="ChEBI" id="CHEBI:29103"/>
    </ligand>
</feature>
<feature type="binding site" evidence="1">
    <location>
        <begin position="131"/>
        <end position="137"/>
    </location>
    <ligand>
        <name>(6S)-NADPHX</name>
        <dbReference type="ChEBI" id="CHEBI:64076"/>
    </ligand>
</feature>
<feature type="binding site" evidence="1">
    <location>
        <position position="160"/>
    </location>
    <ligand>
        <name>(6S)-NADPHX</name>
        <dbReference type="ChEBI" id="CHEBI:64076"/>
    </ligand>
</feature>
<feature type="binding site" evidence="1">
    <location>
        <position position="163"/>
    </location>
    <ligand>
        <name>K(+)</name>
        <dbReference type="ChEBI" id="CHEBI:29103"/>
    </ligand>
</feature>
<reference key="1">
    <citation type="journal article" date="2003" name="PLoS Biol.">
        <title>The genome sequence of Caenorhabditis briggsae: a platform for comparative genomics.</title>
        <authorList>
            <person name="Stein L.D."/>
            <person name="Bao Z."/>
            <person name="Blasiar D."/>
            <person name="Blumenthal T."/>
            <person name="Brent M.R."/>
            <person name="Chen N."/>
            <person name="Chinwalla A."/>
            <person name="Clarke L."/>
            <person name="Clee C."/>
            <person name="Coghlan A."/>
            <person name="Coulson A."/>
            <person name="D'Eustachio P."/>
            <person name="Fitch D.H.A."/>
            <person name="Fulton L.A."/>
            <person name="Fulton R.E."/>
            <person name="Griffiths-Jones S."/>
            <person name="Harris T.W."/>
            <person name="Hillier L.W."/>
            <person name="Kamath R."/>
            <person name="Kuwabara P.E."/>
            <person name="Mardis E.R."/>
            <person name="Marra M.A."/>
            <person name="Miner T.L."/>
            <person name="Minx P."/>
            <person name="Mullikin J.C."/>
            <person name="Plumb R.W."/>
            <person name="Rogers J."/>
            <person name="Schein J.E."/>
            <person name="Sohrmann M."/>
            <person name="Spieth J."/>
            <person name="Stajich J.E."/>
            <person name="Wei C."/>
            <person name="Willey D."/>
            <person name="Wilson R.K."/>
            <person name="Durbin R.M."/>
            <person name="Waterston R.H."/>
        </authorList>
    </citation>
    <scope>NUCLEOTIDE SEQUENCE [LARGE SCALE GENOMIC DNA]</scope>
    <source>
        <strain>AF16</strain>
    </source>
</reference>
<protein>
    <recommendedName>
        <fullName evidence="1">NAD(P)H-hydrate epimerase</fullName>
        <ecNumber>5.1.99.6</ecNumber>
    </recommendedName>
    <alternativeName>
        <fullName evidence="1">NAD(P)HX epimerase</fullName>
    </alternativeName>
</protein>
<organism>
    <name type="scientific">Caenorhabditis briggsae</name>
    <dbReference type="NCBI Taxonomy" id="6238"/>
    <lineage>
        <taxon>Eukaryota</taxon>
        <taxon>Metazoa</taxon>
        <taxon>Ecdysozoa</taxon>
        <taxon>Nematoda</taxon>
        <taxon>Chromadorea</taxon>
        <taxon>Rhabditida</taxon>
        <taxon>Rhabditina</taxon>
        <taxon>Rhabditomorpha</taxon>
        <taxon>Rhabditoidea</taxon>
        <taxon>Rhabditidae</taxon>
        <taxon>Peloderinae</taxon>
        <taxon>Caenorhabditis</taxon>
    </lineage>
</organism>
<evidence type="ECO:0000255" key="1">
    <source>
        <dbReference type="HAMAP-Rule" id="MF_03159"/>
    </source>
</evidence>
<name>NNRE_CAEBR</name>
<keyword id="KW-0413">Isomerase</keyword>
<keyword id="KW-0479">Metal-binding</keyword>
<keyword id="KW-0520">NAD</keyword>
<keyword id="KW-0521">NADP</keyword>
<keyword id="KW-0547">Nucleotide-binding</keyword>
<keyword id="KW-0630">Potassium</keyword>
<keyword id="KW-1185">Reference proteome</keyword>
<proteinExistence type="inferred from homology"/>
<sequence length="235" mass="25632">MVHIISKKSVSFIGQSLAAKIDEQLFSKYGFKVEQLMELAGLASAQAIAAHYPKSKVAVLCGPGNNGGDGFVCARHLQQFGFNPSIVYPKESKNELMKSLVIQCETSSIPVQPNLPTDLQSFPLIVDALFGFSFKPPAREPFTEILKAVRASGIHVFSIDIPSGWDVENGAPSEASEDIIHPHAVISLTLPKMCMKSWTGPHFLGGRFVPRGLVEEHGLQMPVYPGFEQIVKVED</sequence>
<comment type="function">
    <text evidence="1">Catalyzes the epimerization of the S- and R-forms of NAD(P)HX, a damaged form of NAD(P)H that is a result of enzymatic or heat-dependent hydration. This is a prerequisite for the S-specific NAD(P)H-hydrate dehydratase to allow the repair of both epimers of NAD(P)HX.</text>
</comment>
<comment type="catalytic activity">
    <reaction>
        <text>(6R)-NADHX = (6S)-NADHX</text>
        <dbReference type="Rhea" id="RHEA:32215"/>
        <dbReference type="ChEBI" id="CHEBI:64074"/>
        <dbReference type="ChEBI" id="CHEBI:64075"/>
        <dbReference type="EC" id="5.1.99.6"/>
    </reaction>
</comment>
<comment type="catalytic activity">
    <reaction>
        <text>(6R)-NADPHX = (6S)-NADPHX</text>
        <dbReference type="Rhea" id="RHEA:32227"/>
        <dbReference type="ChEBI" id="CHEBI:64076"/>
        <dbReference type="ChEBI" id="CHEBI:64077"/>
        <dbReference type="EC" id="5.1.99.6"/>
    </reaction>
</comment>
<comment type="cofactor">
    <cofactor evidence="1">
        <name>K(+)</name>
        <dbReference type="ChEBI" id="CHEBI:29103"/>
    </cofactor>
    <text evidence="1">Binds 1 potassium ion per subunit.</text>
</comment>
<comment type="similarity">
    <text evidence="1">Belongs to the NnrE/AIBP family.</text>
</comment>